<accession>Q3AET5</accession>
<organism>
    <name type="scientific">Carboxydothermus hydrogenoformans (strain ATCC BAA-161 / DSM 6008 / Z-2901)</name>
    <dbReference type="NCBI Taxonomy" id="246194"/>
    <lineage>
        <taxon>Bacteria</taxon>
        <taxon>Bacillati</taxon>
        <taxon>Bacillota</taxon>
        <taxon>Clostridia</taxon>
        <taxon>Thermoanaerobacterales</taxon>
        <taxon>Thermoanaerobacteraceae</taxon>
        <taxon>Carboxydothermus</taxon>
    </lineage>
</organism>
<gene>
    <name evidence="1" type="primary">gcvPA</name>
    <name type="ordered locus">CHY_0491</name>
</gene>
<evidence type="ECO:0000255" key="1">
    <source>
        <dbReference type="HAMAP-Rule" id="MF_00712"/>
    </source>
</evidence>
<dbReference type="EC" id="1.4.4.2" evidence="1"/>
<dbReference type="EMBL" id="CP000141">
    <property type="protein sequence ID" value="ABB15168.1"/>
    <property type="molecule type" value="Genomic_DNA"/>
</dbReference>
<dbReference type="RefSeq" id="WP_011343425.1">
    <property type="nucleotide sequence ID" value="NC_007503.1"/>
</dbReference>
<dbReference type="SMR" id="Q3AET5"/>
<dbReference type="FunCoup" id="Q3AET5">
    <property type="interactions" value="75"/>
</dbReference>
<dbReference type="STRING" id="246194.CHY_0491"/>
<dbReference type="KEGG" id="chy:CHY_0491"/>
<dbReference type="eggNOG" id="COG0403">
    <property type="taxonomic scope" value="Bacteria"/>
</dbReference>
<dbReference type="HOGENOM" id="CLU_004620_0_2_9"/>
<dbReference type="InParanoid" id="Q3AET5"/>
<dbReference type="OrthoDB" id="9771867at2"/>
<dbReference type="Proteomes" id="UP000002706">
    <property type="component" value="Chromosome"/>
</dbReference>
<dbReference type="GO" id="GO:0004375">
    <property type="term" value="F:glycine dehydrogenase (decarboxylating) activity"/>
    <property type="evidence" value="ECO:0007669"/>
    <property type="project" value="UniProtKB-EC"/>
</dbReference>
<dbReference type="GO" id="GO:0019464">
    <property type="term" value="P:glycine decarboxylation via glycine cleavage system"/>
    <property type="evidence" value="ECO:0007669"/>
    <property type="project" value="UniProtKB-UniRule"/>
</dbReference>
<dbReference type="GO" id="GO:0009116">
    <property type="term" value="P:nucleoside metabolic process"/>
    <property type="evidence" value="ECO:0007669"/>
    <property type="project" value="InterPro"/>
</dbReference>
<dbReference type="CDD" id="cd00613">
    <property type="entry name" value="GDC-P"/>
    <property type="match status" value="1"/>
</dbReference>
<dbReference type="Gene3D" id="3.90.1150.10">
    <property type="entry name" value="Aspartate Aminotransferase, domain 1"/>
    <property type="match status" value="1"/>
</dbReference>
<dbReference type="Gene3D" id="3.40.640.10">
    <property type="entry name" value="Type I PLP-dependent aspartate aminotransferase-like (Major domain)"/>
    <property type="match status" value="1"/>
</dbReference>
<dbReference type="HAMAP" id="MF_00712">
    <property type="entry name" value="GcvPA"/>
    <property type="match status" value="1"/>
</dbReference>
<dbReference type="InterPro" id="IPR023010">
    <property type="entry name" value="GcvPA"/>
</dbReference>
<dbReference type="InterPro" id="IPR049315">
    <property type="entry name" value="GDC-P_N"/>
</dbReference>
<dbReference type="InterPro" id="IPR020581">
    <property type="entry name" value="GDC_P"/>
</dbReference>
<dbReference type="InterPro" id="IPR015424">
    <property type="entry name" value="PyrdxlP-dep_Trfase"/>
</dbReference>
<dbReference type="InterPro" id="IPR015421">
    <property type="entry name" value="PyrdxlP-dep_Trfase_major"/>
</dbReference>
<dbReference type="InterPro" id="IPR015422">
    <property type="entry name" value="PyrdxlP-dep_Trfase_small"/>
</dbReference>
<dbReference type="NCBIfam" id="NF001696">
    <property type="entry name" value="PRK00451.1"/>
    <property type="match status" value="1"/>
</dbReference>
<dbReference type="PANTHER" id="PTHR42806">
    <property type="entry name" value="GLYCINE CLEAVAGE SYSTEM P-PROTEIN"/>
    <property type="match status" value="1"/>
</dbReference>
<dbReference type="PANTHER" id="PTHR42806:SF1">
    <property type="entry name" value="GLYCINE DEHYDROGENASE (DECARBOXYLATING)"/>
    <property type="match status" value="1"/>
</dbReference>
<dbReference type="Pfam" id="PF02347">
    <property type="entry name" value="GDC-P"/>
    <property type="match status" value="1"/>
</dbReference>
<dbReference type="PIRSF" id="PIRSF006815">
    <property type="entry name" value="GcvPA"/>
    <property type="match status" value="1"/>
</dbReference>
<dbReference type="SUPFAM" id="SSF53383">
    <property type="entry name" value="PLP-dependent transferases"/>
    <property type="match status" value="1"/>
</dbReference>
<comment type="function">
    <text evidence="1">The glycine cleavage system catalyzes the degradation of glycine. The P protein binds the alpha-amino group of glycine through its pyridoxal phosphate cofactor; CO(2) is released and the remaining methylamine moiety is then transferred to the lipoamide cofactor of the H protein.</text>
</comment>
<comment type="catalytic activity">
    <reaction evidence="1">
        <text>N(6)-[(R)-lipoyl]-L-lysyl-[glycine-cleavage complex H protein] + glycine + H(+) = N(6)-[(R)-S(8)-aminomethyldihydrolipoyl]-L-lysyl-[glycine-cleavage complex H protein] + CO2</text>
        <dbReference type="Rhea" id="RHEA:24304"/>
        <dbReference type="Rhea" id="RHEA-COMP:10494"/>
        <dbReference type="Rhea" id="RHEA-COMP:10495"/>
        <dbReference type="ChEBI" id="CHEBI:15378"/>
        <dbReference type="ChEBI" id="CHEBI:16526"/>
        <dbReference type="ChEBI" id="CHEBI:57305"/>
        <dbReference type="ChEBI" id="CHEBI:83099"/>
        <dbReference type="ChEBI" id="CHEBI:83143"/>
        <dbReference type="EC" id="1.4.4.2"/>
    </reaction>
</comment>
<comment type="subunit">
    <text evidence="1">The glycine cleavage system is composed of four proteins: P, T, L and H. In this organism, the P 'protein' is a heterodimer of two subunits.</text>
</comment>
<comment type="similarity">
    <text evidence="1">Belongs to the GcvP family. N-terminal subunit subfamily.</text>
</comment>
<sequence length="444" mass="48908">MKYTPHTPDEVREMLSSLGLSSIEELFSDIPEEVKLKRPLNLPSGMSELEVKKHLANLAAKNGSADKYTVFLGAGVYDHYVPAVVNHILLRSEFYTAYTPYQAEMSQGVLQSIFEYQTMICELTGLDITNASMYDGGSALAEAALMAVSQTRRDKVLVLATVHPEYRSVVKTYTWGPEIEVVEVPYKSGTVDLEKLEELIDDKTAAVLVQHPNFFGQLEPVEEISRLIHAQKGLLVVAVDPISLGILKPPAEYGADIAVGDGQALGNGLAFGGPHLGFFAARKDLARRMPGRLVGLTTDKEGNRGFVLTLQAREQHIRREKATSNICSNQALNALAATVYLATVGKKGLKEIALQSLQKAHYAFERLIGEGYEPLFSGPFFKEFVVKVKNEEEITQKLLKHHILAGPGISRFYPELAPALMIAVTEKRTREEIDNLVEVLGGDR</sequence>
<proteinExistence type="inferred from homology"/>
<keyword id="KW-0560">Oxidoreductase</keyword>
<keyword id="KW-1185">Reference proteome</keyword>
<name>GCSPA_CARHZ</name>
<feature type="chain" id="PRO_1000045640" description="Probable glycine dehydrogenase (decarboxylating) subunit 1">
    <location>
        <begin position="1"/>
        <end position="444"/>
    </location>
</feature>
<reference key="1">
    <citation type="journal article" date="2005" name="PLoS Genet.">
        <title>Life in hot carbon monoxide: the complete genome sequence of Carboxydothermus hydrogenoformans Z-2901.</title>
        <authorList>
            <person name="Wu M."/>
            <person name="Ren Q."/>
            <person name="Durkin A.S."/>
            <person name="Daugherty S.C."/>
            <person name="Brinkac L.M."/>
            <person name="Dodson R.J."/>
            <person name="Madupu R."/>
            <person name="Sullivan S.A."/>
            <person name="Kolonay J.F."/>
            <person name="Nelson W.C."/>
            <person name="Tallon L.J."/>
            <person name="Jones K.M."/>
            <person name="Ulrich L.E."/>
            <person name="Gonzalez J.M."/>
            <person name="Zhulin I.B."/>
            <person name="Robb F.T."/>
            <person name="Eisen J.A."/>
        </authorList>
    </citation>
    <scope>NUCLEOTIDE SEQUENCE [LARGE SCALE GENOMIC DNA]</scope>
    <source>
        <strain>ATCC BAA-161 / DSM 6008 / Z-2901</strain>
    </source>
</reference>
<protein>
    <recommendedName>
        <fullName evidence="1">Probable glycine dehydrogenase (decarboxylating) subunit 1</fullName>
        <ecNumber evidence="1">1.4.4.2</ecNumber>
    </recommendedName>
    <alternativeName>
        <fullName evidence="1">Glycine cleavage system P-protein subunit 1</fullName>
    </alternativeName>
    <alternativeName>
        <fullName evidence="1">Glycine decarboxylase subunit 1</fullName>
    </alternativeName>
    <alternativeName>
        <fullName evidence="1">Glycine dehydrogenase (aminomethyl-transferring) subunit 1</fullName>
    </alternativeName>
</protein>